<sequence>MKWQQRVRVATGLSCWQIMLHLLVVALLVVGWMSKTLVHVGVGLCALYCVTVVMMLVFQRHPEQRWREVADVLEELTTTWYFGAALIVLWLLSRVLENNFLLAIAGLAILAGPAVVSLLAKDKKLHHLTSKHRVRR</sequence>
<reference key="1">
    <citation type="journal article" date="1996" name="DNA Res.">
        <title>A 718-kb DNA sequence of the Escherichia coli K-12 genome corresponding to the 12.7-28.0 min region on the linkage map.</title>
        <authorList>
            <person name="Oshima T."/>
            <person name="Aiba H."/>
            <person name="Baba T."/>
            <person name="Fujita K."/>
            <person name="Hayashi K."/>
            <person name="Honjo A."/>
            <person name="Ikemoto K."/>
            <person name="Inada T."/>
            <person name="Itoh T."/>
            <person name="Kajihara M."/>
            <person name="Kanai K."/>
            <person name="Kashimoto K."/>
            <person name="Kimura S."/>
            <person name="Kitagawa M."/>
            <person name="Makino K."/>
            <person name="Masuda S."/>
            <person name="Miki T."/>
            <person name="Mizobuchi K."/>
            <person name="Mori H."/>
            <person name="Motomura K."/>
            <person name="Nakamura Y."/>
            <person name="Nashimoto H."/>
            <person name="Nishio Y."/>
            <person name="Saito N."/>
            <person name="Sampei G."/>
            <person name="Seki Y."/>
            <person name="Tagami H."/>
            <person name="Takemoto K."/>
            <person name="Wada C."/>
            <person name="Yamamoto Y."/>
            <person name="Yano M."/>
            <person name="Horiuchi T."/>
        </authorList>
    </citation>
    <scope>NUCLEOTIDE SEQUENCE [LARGE SCALE GENOMIC DNA]</scope>
    <source>
        <strain>K12 / W3110 / ATCC 27325 / DSM 5911</strain>
    </source>
</reference>
<reference key="2">
    <citation type="journal article" date="1997" name="Science">
        <title>The complete genome sequence of Escherichia coli K-12.</title>
        <authorList>
            <person name="Blattner F.R."/>
            <person name="Plunkett G. III"/>
            <person name="Bloch C.A."/>
            <person name="Perna N.T."/>
            <person name="Burland V."/>
            <person name="Riley M."/>
            <person name="Collado-Vides J."/>
            <person name="Glasner J.D."/>
            <person name="Rode C.K."/>
            <person name="Mayhew G.F."/>
            <person name="Gregor J."/>
            <person name="Davis N.W."/>
            <person name="Kirkpatrick H.A."/>
            <person name="Goeden M.A."/>
            <person name="Rose D.J."/>
            <person name="Mau B."/>
            <person name="Shao Y."/>
        </authorList>
    </citation>
    <scope>NUCLEOTIDE SEQUENCE [LARGE SCALE GENOMIC DNA]</scope>
    <source>
        <strain>K12 / MG1655 / ATCC 47076</strain>
    </source>
</reference>
<reference key="3">
    <citation type="journal article" date="2006" name="Mol. Syst. Biol.">
        <title>Highly accurate genome sequences of Escherichia coli K-12 strains MG1655 and W3110.</title>
        <authorList>
            <person name="Hayashi K."/>
            <person name="Morooka N."/>
            <person name="Yamamoto Y."/>
            <person name="Fujita K."/>
            <person name="Isono K."/>
            <person name="Choi S."/>
            <person name="Ohtsubo E."/>
            <person name="Baba T."/>
            <person name="Wanner B.L."/>
            <person name="Mori H."/>
            <person name="Horiuchi T."/>
        </authorList>
    </citation>
    <scope>NUCLEOTIDE SEQUENCE [LARGE SCALE GENOMIC DNA]</scope>
    <source>
        <strain>K12 / W3110 / ATCC 27325 / DSM 5911</strain>
    </source>
</reference>
<reference key="4">
    <citation type="journal article" date="2005" name="Science">
        <title>Global topology analysis of the Escherichia coli inner membrane proteome.</title>
        <authorList>
            <person name="Daley D.O."/>
            <person name="Rapp M."/>
            <person name="Granseth E."/>
            <person name="Melen K."/>
            <person name="Drew D."/>
            <person name="von Heijne G."/>
        </authorList>
    </citation>
    <scope>TOPOLOGY [LARGE SCALE ANALYSIS]</scope>
    <source>
        <strain>K12 / MG1655 / ATCC 47076</strain>
    </source>
</reference>
<organism>
    <name type="scientific">Escherichia coli (strain K12)</name>
    <dbReference type="NCBI Taxonomy" id="83333"/>
    <lineage>
        <taxon>Bacteria</taxon>
        <taxon>Pseudomonadati</taxon>
        <taxon>Pseudomonadota</taxon>
        <taxon>Gammaproteobacteria</taxon>
        <taxon>Enterobacterales</taxon>
        <taxon>Enterobacteriaceae</taxon>
        <taxon>Escherichia</taxon>
    </lineage>
</organism>
<accession>P0AAW5</accession>
<accession>P75773</accession>
<keyword id="KW-0997">Cell inner membrane</keyword>
<keyword id="KW-1003">Cell membrane</keyword>
<keyword id="KW-0472">Membrane</keyword>
<keyword id="KW-1185">Reference proteome</keyword>
<keyword id="KW-0812">Transmembrane</keyword>
<keyword id="KW-1133">Transmembrane helix</keyword>
<protein>
    <recommendedName>
        <fullName>Inner membrane protein YbhQ</fullName>
    </recommendedName>
</protein>
<comment type="subcellular location">
    <subcellularLocation>
        <location>Cell inner membrane</location>
        <topology>Multi-pass membrane protein</topology>
    </subcellularLocation>
</comment>
<gene>
    <name type="primary">ybhQ</name>
    <name type="ordered locus">b0791</name>
    <name type="ordered locus">JW0774</name>
</gene>
<dbReference type="EMBL" id="U00096">
    <property type="protein sequence ID" value="AAC73878.1"/>
    <property type="molecule type" value="Genomic_DNA"/>
</dbReference>
<dbReference type="EMBL" id="AP009048">
    <property type="protein sequence ID" value="BAA35450.1"/>
    <property type="molecule type" value="Genomic_DNA"/>
</dbReference>
<dbReference type="PIR" id="G64815">
    <property type="entry name" value="G64815"/>
</dbReference>
<dbReference type="RefSeq" id="NP_415312.1">
    <property type="nucleotide sequence ID" value="NC_000913.3"/>
</dbReference>
<dbReference type="RefSeq" id="WP_000871982.1">
    <property type="nucleotide sequence ID" value="NZ_SSZK01000002.1"/>
</dbReference>
<dbReference type="BioGRID" id="4261833">
    <property type="interactions" value="8"/>
</dbReference>
<dbReference type="FunCoup" id="P0AAW5">
    <property type="interactions" value="53"/>
</dbReference>
<dbReference type="STRING" id="511145.b0791"/>
<dbReference type="PaxDb" id="511145-b0791"/>
<dbReference type="EnsemblBacteria" id="AAC73878">
    <property type="protein sequence ID" value="AAC73878"/>
    <property type="gene ID" value="b0791"/>
</dbReference>
<dbReference type="GeneID" id="945405"/>
<dbReference type="KEGG" id="ecj:JW0774"/>
<dbReference type="KEGG" id="eco:b0791"/>
<dbReference type="KEGG" id="ecoc:C3026_05005"/>
<dbReference type="PATRIC" id="fig|1411691.4.peg.1487"/>
<dbReference type="EchoBASE" id="EB3437"/>
<dbReference type="eggNOG" id="ENOG502ZPQP">
    <property type="taxonomic scope" value="Bacteria"/>
</dbReference>
<dbReference type="HOGENOM" id="CLU_147415_0_0_6"/>
<dbReference type="InParanoid" id="P0AAW5"/>
<dbReference type="OMA" id="SKHRVRH"/>
<dbReference type="OrthoDB" id="6538174at2"/>
<dbReference type="PhylomeDB" id="P0AAW5"/>
<dbReference type="BioCyc" id="EcoCyc:G6408-MONOMER"/>
<dbReference type="PRO" id="PR:P0AAW5"/>
<dbReference type="Proteomes" id="UP000000625">
    <property type="component" value="Chromosome"/>
</dbReference>
<dbReference type="GO" id="GO:0005886">
    <property type="term" value="C:plasma membrane"/>
    <property type="evidence" value="ECO:0000314"/>
    <property type="project" value="EcoCyc"/>
</dbReference>
<dbReference type="InterPro" id="IPR021303">
    <property type="entry name" value="Uncharacterised_YbhQ"/>
</dbReference>
<dbReference type="Pfam" id="PF11076">
    <property type="entry name" value="YbhQ"/>
    <property type="match status" value="1"/>
</dbReference>
<feature type="chain" id="PRO_0000168720" description="Inner membrane protein YbhQ">
    <location>
        <begin position="1"/>
        <end position="136"/>
    </location>
</feature>
<feature type="topological domain" description="Cytoplasmic" evidence="1">
    <location>
        <begin position="1"/>
        <end position="12"/>
    </location>
</feature>
<feature type="transmembrane region" description="Helical" evidence="1">
    <location>
        <begin position="13"/>
        <end position="33"/>
    </location>
</feature>
<feature type="topological domain" description="Periplasmic" evidence="1">
    <location>
        <begin position="34"/>
        <end position="37"/>
    </location>
</feature>
<feature type="transmembrane region" description="Helical" evidence="1">
    <location>
        <begin position="38"/>
        <end position="58"/>
    </location>
</feature>
<feature type="topological domain" description="Cytoplasmic" evidence="1">
    <location>
        <begin position="59"/>
        <end position="71"/>
    </location>
</feature>
<feature type="transmembrane region" description="Helical" evidence="1">
    <location>
        <begin position="72"/>
        <end position="92"/>
    </location>
</feature>
<feature type="topological domain" description="Periplasmic" evidence="1">
    <location>
        <begin position="93"/>
        <end position="99"/>
    </location>
</feature>
<feature type="transmembrane region" description="Helical" evidence="1">
    <location>
        <begin position="100"/>
        <end position="120"/>
    </location>
</feature>
<feature type="topological domain" description="Cytoplasmic" evidence="1">
    <location>
        <begin position="121"/>
        <end position="136"/>
    </location>
</feature>
<name>YBHQ_ECOLI</name>
<proteinExistence type="evidence at protein level"/>
<evidence type="ECO:0000255" key="1"/>